<comment type="function">
    <text evidence="1">Involved in the TCA cycle. Catalyzes the stereospecific interconversion of fumarate to L-malate.</text>
</comment>
<comment type="catalytic activity">
    <reaction evidence="1">
        <text>(S)-malate = fumarate + H2O</text>
        <dbReference type="Rhea" id="RHEA:12460"/>
        <dbReference type="ChEBI" id="CHEBI:15377"/>
        <dbReference type="ChEBI" id="CHEBI:15589"/>
        <dbReference type="ChEBI" id="CHEBI:29806"/>
        <dbReference type="EC" id="4.2.1.2"/>
    </reaction>
</comment>
<comment type="pathway">
    <text evidence="1">Carbohydrate metabolism; tricarboxylic acid cycle; (S)-malate from fumarate: step 1/1.</text>
</comment>
<comment type="subunit">
    <text evidence="1">Homotetramer.</text>
</comment>
<comment type="subcellular location">
    <subcellularLocation>
        <location evidence="1">Cytoplasm</location>
    </subcellularLocation>
</comment>
<comment type="miscellaneous">
    <text evidence="1">There are 2 substrate-binding sites: the catalytic A site, and the non-catalytic B site that may play a role in the transfer of substrate or product between the active site and the solvent. Alternatively, the B site may bind allosteric effectors.</text>
</comment>
<comment type="similarity">
    <text evidence="1">Belongs to the class-II fumarase/aspartase family. Fumarase subfamily.</text>
</comment>
<feature type="chain" id="PRO_0000161298" description="Fumarate hydratase class II">
    <location>
        <begin position="1"/>
        <end position="461"/>
    </location>
</feature>
<feature type="active site" description="Proton donor/acceptor" evidence="1">
    <location>
        <position position="189"/>
    </location>
</feature>
<feature type="active site" evidence="1">
    <location>
        <position position="319"/>
    </location>
</feature>
<feature type="binding site" evidence="1">
    <location>
        <begin position="99"/>
        <end position="101"/>
    </location>
    <ligand>
        <name>substrate</name>
    </ligand>
</feature>
<feature type="binding site" description="in site B" evidence="1">
    <location>
        <begin position="130"/>
        <end position="133"/>
    </location>
    <ligand>
        <name>substrate</name>
    </ligand>
</feature>
<feature type="binding site" evidence="1">
    <location>
        <begin position="140"/>
        <end position="142"/>
    </location>
    <ligand>
        <name>substrate</name>
    </ligand>
</feature>
<feature type="binding site" evidence="1">
    <location>
        <position position="188"/>
    </location>
    <ligand>
        <name>substrate</name>
    </ligand>
</feature>
<feature type="binding site" evidence="1">
    <location>
        <position position="320"/>
    </location>
    <ligand>
        <name>substrate</name>
    </ligand>
</feature>
<feature type="binding site" evidence="1">
    <location>
        <begin position="325"/>
        <end position="327"/>
    </location>
    <ligand>
        <name>substrate</name>
    </ligand>
</feature>
<feature type="site" description="Important for catalytic activity" evidence="1">
    <location>
        <position position="332"/>
    </location>
</feature>
<accession>Q7V024</accession>
<sequence length="461" mass="50624">MTKNFRFEKDSMGQIKVPSEALWGAQTQRSIINFSIGEELIPIELIYSLTVIKRAAAISNFKLGLINNVKKDLIIEACTEILDGKHDSQFPLKIWQTGSGTQTNMNINEVISNIAALKTNSGLGSHHPIHPNDDVNKSQSTNDTFPAAIQISVVTQIIKKLVPSIKELTKVLDSKSNKWKDLIKIGRTHFQDAVPISLGQEVSAWSKQLKDAEDALIISLNELCFLPLGGTAVGTGINCPKDFSKESIKSISEYTGLFFYKSKNHFSLMASHDRLAQVMGQIKILASALFKISNDIKILSSGPRSGIYELIIPKNEPGSSIMPGKVNPTQCEALSMVCTQVMGFEYAVSIANASGTLQMNEYKPLIGFNILTSIKLLNHAISNFRLKLVEGIQPNPKTIKANLENSLMLVTALVPKIGYEKAAEIANLAFNESINLKEATIKLGYLTANEFEDAINTNKMI</sequence>
<evidence type="ECO:0000255" key="1">
    <source>
        <dbReference type="HAMAP-Rule" id="MF_00743"/>
    </source>
</evidence>
<reference key="1">
    <citation type="journal article" date="2003" name="Nature">
        <title>Genome divergence in two Prochlorococcus ecotypes reflects oceanic niche differentiation.</title>
        <authorList>
            <person name="Rocap G."/>
            <person name="Larimer F.W."/>
            <person name="Lamerdin J.E."/>
            <person name="Malfatti S."/>
            <person name="Chain P."/>
            <person name="Ahlgren N.A."/>
            <person name="Arellano A."/>
            <person name="Coleman M."/>
            <person name="Hauser L."/>
            <person name="Hess W.R."/>
            <person name="Johnson Z.I."/>
            <person name="Land M.L."/>
            <person name="Lindell D."/>
            <person name="Post A.F."/>
            <person name="Regala W."/>
            <person name="Shah M."/>
            <person name="Shaw S.L."/>
            <person name="Steglich C."/>
            <person name="Sullivan M.B."/>
            <person name="Ting C.S."/>
            <person name="Tolonen A."/>
            <person name="Webb E.A."/>
            <person name="Zinser E.R."/>
            <person name="Chisholm S.W."/>
        </authorList>
    </citation>
    <scope>NUCLEOTIDE SEQUENCE [LARGE SCALE GENOMIC DNA]</scope>
    <source>
        <strain>CCMP1986 / NIES-2087 / MED4</strain>
    </source>
</reference>
<protein>
    <recommendedName>
        <fullName evidence="1">Fumarate hydratase class II</fullName>
        <shortName evidence="1">Fumarase C</shortName>
        <ecNumber evidence="1">4.2.1.2</ecNumber>
    </recommendedName>
    <alternativeName>
        <fullName evidence="1">Aerobic fumarase</fullName>
    </alternativeName>
    <alternativeName>
        <fullName evidence="1">Iron-independent fumarase</fullName>
    </alternativeName>
</protein>
<gene>
    <name evidence="1" type="primary">fumC</name>
    <name type="ordered locus">PMM1466</name>
</gene>
<dbReference type="EC" id="4.2.1.2" evidence="1"/>
<dbReference type="EMBL" id="BX548174">
    <property type="protein sequence ID" value="CAE19925.1"/>
    <property type="molecule type" value="Genomic_DNA"/>
</dbReference>
<dbReference type="RefSeq" id="WP_011133094.1">
    <property type="nucleotide sequence ID" value="NC_005072.1"/>
</dbReference>
<dbReference type="SMR" id="Q7V024"/>
<dbReference type="STRING" id="59919.PMM1466"/>
<dbReference type="KEGG" id="pmm:PMM1466"/>
<dbReference type="eggNOG" id="COG0114">
    <property type="taxonomic scope" value="Bacteria"/>
</dbReference>
<dbReference type="HOGENOM" id="CLU_021594_4_1_3"/>
<dbReference type="OrthoDB" id="9802809at2"/>
<dbReference type="UniPathway" id="UPA00223">
    <property type="reaction ID" value="UER01007"/>
</dbReference>
<dbReference type="Proteomes" id="UP000001026">
    <property type="component" value="Chromosome"/>
</dbReference>
<dbReference type="GO" id="GO:0005737">
    <property type="term" value="C:cytoplasm"/>
    <property type="evidence" value="ECO:0007669"/>
    <property type="project" value="UniProtKB-SubCell"/>
</dbReference>
<dbReference type="GO" id="GO:0004333">
    <property type="term" value="F:fumarate hydratase activity"/>
    <property type="evidence" value="ECO:0007669"/>
    <property type="project" value="UniProtKB-UniRule"/>
</dbReference>
<dbReference type="GO" id="GO:0006106">
    <property type="term" value="P:fumarate metabolic process"/>
    <property type="evidence" value="ECO:0007669"/>
    <property type="project" value="InterPro"/>
</dbReference>
<dbReference type="GO" id="GO:0006108">
    <property type="term" value="P:malate metabolic process"/>
    <property type="evidence" value="ECO:0007669"/>
    <property type="project" value="TreeGrafter"/>
</dbReference>
<dbReference type="GO" id="GO:0006099">
    <property type="term" value="P:tricarboxylic acid cycle"/>
    <property type="evidence" value="ECO:0007669"/>
    <property type="project" value="UniProtKB-UniRule"/>
</dbReference>
<dbReference type="CDD" id="cd01362">
    <property type="entry name" value="Fumarase_classII"/>
    <property type="match status" value="1"/>
</dbReference>
<dbReference type="FunFam" id="1.10.40.30:FF:000002">
    <property type="entry name" value="Fumarate hydratase class II"/>
    <property type="match status" value="1"/>
</dbReference>
<dbReference type="FunFam" id="1.10.275.10:FF:000001">
    <property type="entry name" value="Fumarate hydratase, mitochondrial"/>
    <property type="match status" value="1"/>
</dbReference>
<dbReference type="FunFam" id="1.20.200.10:FF:000001">
    <property type="entry name" value="Fumarate hydratase, mitochondrial"/>
    <property type="match status" value="1"/>
</dbReference>
<dbReference type="Gene3D" id="1.10.40.30">
    <property type="entry name" value="Fumarase/aspartase (C-terminal domain)"/>
    <property type="match status" value="1"/>
</dbReference>
<dbReference type="Gene3D" id="1.20.200.10">
    <property type="entry name" value="Fumarase/aspartase (Central domain)"/>
    <property type="match status" value="1"/>
</dbReference>
<dbReference type="Gene3D" id="1.10.275.10">
    <property type="entry name" value="Fumarase/aspartase (N-terminal domain)"/>
    <property type="match status" value="1"/>
</dbReference>
<dbReference type="HAMAP" id="MF_00743">
    <property type="entry name" value="FumaraseC"/>
    <property type="match status" value="1"/>
</dbReference>
<dbReference type="InterPro" id="IPR005677">
    <property type="entry name" value="Fum_hydII"/>
</dbReference>
<dbReference type="InterPro" id="IPR024083">
    <property type="entry name" value="Fumarase/histidase_N"/>
</dbReference>
<dbReference type="InterPro" id="IPR018951">
    <property type="entry name" value="Fumarase_C_C"/>
</dbReference>
<dbReference type="InterPro" id="IPR020557">
    <property type="entry name" value="Fumarate_lyase_CS"/>
</dbReference>
<dbReference type="InterPro" id="IPR000362">
    <property type="entry name" value="Fumarate_lyase_fam"/>
</dbReference>
<dbReference type="InterPro" id="IPR022761">
    <property type="entry name" value="Fumarate_lyase_N"/>
</dbReference>
<dbReference type="InterPro" id="IPR008948">
    <property type="entry name" value="L-Aspartase-like"/>
</dbReference>
<dbReference type="PANTHER" id="PTHR11444">
    <property type="entry name" value="ASPARTATEAMMONIA/ARGININOSUCCINATE/ADENYLOSUCCINATE LYASE"/>
    <property type="match status" value="1"/>
</dbReference>
<dbReference type="PANTHER" id="PTHR11444:SF1">
    <property type="entry name" value="FUMARATE HYDRATASE, MITOCHONDRIAL"/>
    <property type="match status" value="1"/>
</dbReference>
<dbReference type="Pfam" id="PF10415">
    <property type="entry name" value="FumaraseC_C"/>
    <property type="match status" value="1"/>
</dbReference>
<dbReference type="Pfam" id="PF00206">
    <property type="entry name" value="Lyase_1"/>
    <property type="match status" value="1"/>
</dbReference>
<dbReference type="PRINTS" id="PR00149">
    <property type="entry name" value="FUMRATELYASE"/>
</dbReference>
<dbReference type="SUPFAM" id="SSF48557">
    <property type="entry name" value="L-aspartase-like"/>
    <property type="match status" value="1"/>
</dbReference>
<dbReference type="PROSITE" id="PS00163">
    <property type="entry name" value="FUMARATE_LYASES"/>
    <property type="match status" value="1"/>
</dbReference>
<organism>
    <name type="scientific">Prochlorococcus marinus subsp. pastoris (strain CCMP1986 / NIES-2087 / MED4)</name>
    <dbReference type="NCBI Taxonomy" id="59919"/>
    <lineage>
        <taxon>Bacteria</taxon>
        <taxon>Bacillati</taxon>
        <taxon>Cyanobacteriota</taxon>
        <taxon>Cyanophyceae</taxon>
        <taxon>Synechococcales</taxon>
        <taxon>Prochlorococcaceae</taxon>
        <taxon>Prochlorococcus</taxon>
    </lineage>
</organism>
<name>FUMC_PROMP</name>
<keyword id="KW-0963">Cytoplasm</keyword>
<keyword id="KW-0456">Lyase</keyword>
<keyword id="KW-0816">Tricarboxylic acid cycle</keyword>
<proteinExistence type="inferred from homology"/>